<proteinExistence type="inferred from homology"/>
<organism>
    <name type="scientific">Yersinia pseudotuberculosis serotype I (strain IP32953)</name>
    <dbReference type="NCBI Taxonomy" id="273123"/>
    <lineage>
        <taxon>Bacteria</taxon>
        <taxon>Pseudomonadati</taxon>
        <taxon>Pseudomonadota</taxon>
        <taxon>Gammaproteobacteria</taxon>
        <taxon>Enterobacterales</taxon>
        <taxon>Yersiniaceae</taxon>
        <taxon>Yersinia</taxon>
    </lineage>
</organism>
<comment type="function">
    <text evidence="1">Trans-acting protein required for termination of DNA replication. Binds to DNA replication terminator sequences (terA to terF) to prevent the passage of replication forks. The termination efficiency will be affected by the affinity of this protein for the terminator sequence.</text>
</comment>
<comment type="subcellular location">
    <subcellularLocation>
        <location evidence="1">Cytoplasm</location>
    </subcellularLocation>
</comment>
<comment type="similarity">
    <text evidence="1">Belongs to the Tus family.</text>
</comment>
<reference key="1">
    <citation type="journal article" date="2004" name="Proc. Natl. Acad. Sci. U.S.A.">
        <title>Insights into the evolution of Yersinia pestis through whole-genome comparison with Yersinia pseudotuberculosis.</title>
        <authorList>
            <person name="Chain P.S.G."/>
            <person name="Carniel E."/>
            <person name="Larimer F.W."/>
            <person name="Lamerdin J."/>
            <person name="Stoutland P.O."/>
            <person name="Regala W.M."/>
            <person name="Georgescu A.M."/>
            <person name="Vergez L.M."/>
            <person name="Land M.L."/>
            <person name="Motin V.L."/>
            <person name="Brubaker R.R."/>
            <person name="Fowler J."/>
            <person name="Hinnebusch J."/>
            <person name="Marceau M."/>
            <person name="Medigue C."/>
            <person name="Simonet M."/>
            <person name="Chenal-Francisque V."/>
            <person name="Souza B."/>
            <person name="Dacheux D."/>
            <person name="Elliott J.M."/>
            <person name="Derbise A."/>
            <person name="Hauser L.J."/>
            <person name="Garcia E."/>
        </authorList>
    </citation>
    <scope>NUCLEOTIDE SEQUENCE [LARGE SCALE GENOMIC DNA]</scope>
    <source>
        <strain>IP32953</strain>
    </source>
</reference>
<accession>Q66AE3</accession>
<dbReference type="EMBL" id="BX936398">
    <property type="protein sequence ID" value="CAH21425.1"/>
    <property type="molecule type" value="Genomic_DNA"/>
</dbReference>
<dbReference type="RefSeq" id="WP_011192476.1">
    <property type="nucleotide sequence ID" value="NC_006155.1"/>
</dbReference>
<dbReference type="SMR" id="Q66AE3"/>
<dbReference type="GeneID" id="49785816"/>
<dbReference type="KEGG" id="ypo:BZ17_274"/>
<dbReference type="KEGG" id="yps:YPTB2187"/>
<dbReference type="PATRIC" id="fig|273123.14.peg.290"/>
<dbReference type="Proteomes" id="UP000001011">
    <property type="component" value="Chromosome"/>
</dbReference>
<dbReference type="GO" id="GO:0005737">
    <property type="term" value="C:cytoplasm"/>
    <property type="evidence" value="ECO:0007669"/>
    <property type="project" value="UniProtKB-SubCell"/>
</dbReference>
<dbReference type="GO" id="GO:0003677">
    <property type="term" value="F:DNA binding"/>
    <property type="evidence" value="ECO:0007669"/>
    <property type="project" value="UniProtKB-UniRule"/>
</dbReference>
<dbReference type="GO" id="GO:0006274">
    <property type="term" value="P:DNA replication termination"/>
    <property type="evidence" value="ECO:0007669"/>
    <property type="project" value="UniProtKB-UniRule"/>
</dbReference>
<dbReference type="Gene3D" id="3.30.54.10">
    <property type="match status" value="1"/>
</dbReference>
<dbReference type="Gene3D" id="3.50.14.10">
    <property type="entry name" value="Replication terminator Tus, domain 1 superfamily/Replication terminator Tus"/>
    <property type="match status" value="1"/>
</dbReference>
<dbReference type="HAMAP" id="MF_00483">
    <property type="entry name" value="Rep_term_Tus"/>
    <property type="match status" value="1"/>
</dbReference>
<dbReference type="InterPro" id="IPR008865">
    <property type="entry name" value="DNA_replication_term_site-bd"/>
</dbReference>
<dbReference type="InterPro" id="IPR036381">
    <property type="entry name" value="Tus_dom1"/>
</dbReference>
<dbReference type="InterPro" id="IPR036384">
    <property type="entry name" value="Tus_sf"/>
</dbReference>
<dbReference type="NCBIfam" id="TIGR02648">
    <property type="entry name" value="rep_term_tus"/>
    <property type="match status" value="1"/>
</dbReference>
<dbReference type="Pfam" id="PF05472">
    <property type="entry name" value="Ter"/>
    <property type="match status" value="1"/>
</dbReference>
<dbReference type="SUPFAM" id="SSF56596">
    <property type="entry name" value="Replication terminator protein (Tus)"/>
    <property type="match status" value="1"/>
</dbReference>
<feature type="chain" id="PRO_0000049425" description="DNA replication terminus site-binding protein">
    <location>
        <begin position="1"/>
        <end position="311"/>
    </location>
</feature>
<name>TUS_YERPS</name>
<gene>
    <name evidence="1" type="primary">tus</name>
    <name type="ordered locus">YPTB2187</name>
</gene>
<keyword id="KW-0963">Cytoplasm</keyword>
<keyword id="KW-0235">DNA replication</keyword>
<keyword id="KW-0238">DNA-binding</keyword>
<sequence>MNKYDLIERMNTRFAELEVTLHQLHQQLDDLPLIAARVFSLPEIEKGTEHQPIEQITVNITEGEHAKRLGLQHFQRLFLHHQGQHVSSKAALRLPGVLCFSVTDKELIECQDIIKKTNQLKAELEHIITVESGLPSEQRFEFVHTHLHGLITLNTYRTITPLINPSSVRFGWANKHIIKNVTREDILLQLEKSLNAGRAVPPFTREQWRELISLEINDVQRLPEKTRLKIKRPVKVQPIARVWYQEQQKQVQHPCPMPLIAFCQRQSGAELPKLGELTDYDVKHIKHKYKPDAKPLRLLVPRLHLYVELEP</sequence>
<evidence type="ECO:0000255" key="1">
    <source>
        <dbReference type="HAMAP-Rule" id="MF_00483"/>
    </source>
</evidence>
<protein>
    <recommendedName>
        <fullName evidence="1">DNA replication terminus site-binding protein</fullName>
        <shortName evidence="1">Ter-binding protein</shortName>
    </recommendedName>
</protein>